<organism>
    <name type="scientific">Olimarabidopsis pumila</name>
    <name type="common">Dwarf rocket</name>
    <name type="synonym">Arabidopsis griffithiana</name>
    <dbReference type="NCBI Taxonomy" id="74718"/>
    <lineage>
        <taxon>Eukaryota</taxon>
        <taxon>Viridiplantae</taxon>
        <taxon>Streptophyta</taxon>
        <taxon>Embryophyta</taxon>
        <taxon>Tracheophyta</taxon>
        <taxon>Spermatophyta</taxon>
        <taxon>Magnoliopsida</taxon>
        <taxon>eudicotyledons</taxon>
        <taxon>Gunneridae</taxon>
        <taxon>Pentapetalae</taxon>
        <taxon>rosids</taxon>
        <taxon>malvids</taxon>
        <taxon>Brassicales</taxon>
        <taxon>Brassicaceae</taxon>
        <taxon>Alyssopsideae</taxon>
        <taxon>Olimarabidopsis</taxon>
    </lineage>
</organism>
<gene>
    <name evidence="1" type="primary">rps19</name>
</gene>
<proteinExistence type="inferred from homology"/>
<feature type="chain" id="PRO_0000354371" description="Small ribosomal subunit protein uS19c">
    <location>
        <begin position="1"/>
        <end position="92"/>
    </location>
</feature>
<dbReference type="EMBL" id="AP009368">
    <property type="protein sequence ID" value="BAF49979.1"/>
    <property type="molecule type" value="Genomic_DNA"/>
</dbReference>
<dbReference type="RefSeq" id="YP_001123155.1">
    <property type="nucleotide sequence ID" value="NC_009267.1"/>
</dbReference>
<dbReference type="SMR" id="A4QJX1"/>
<dbReference type="GeneID" id="4962442"/>
<dbReference type="GO" id="GO:0009507">
    <property type="term" value="C:chloroplast"/>
    <property type="evidence" value="ECO:0007669"/>
    <property type="project" value="UniProtKB-SubCell"/>
</dbReference>
<dbReference type="GO" id="GO:0005763">
    <property type="term" value="C:mitochondrial small ribosomal subunit"/>
    <property type="evidence" value="ECO:0007669"/>
    <property type="project" value="TreeGrafter"/>
</dbReference>
<dbReference type="GO" id="GO:0019843">
    <property type="term" value="F:rRNA binding"/>
    <property type="evidence" value="ECO:0007669"/>
    <property type="project" value="UniProtKB-UniRule"/>
</dbReference>
<dbReference type="GO" id="GO:0003735">
    <property type="term" value="F:structural constituent of ribosome"/>
    <property type="evidence" value="ECO:0007669"/>
    <property type="project" value="InterPro"/>
</dbReference>
<dbReference type="GO" id="GO:0000028">
    <property type="term" value="P:ribosomal small subunit assembly"/>
    <property type="evidence" value="ECO:0007669"/>
    <property type="project" value="TreeGrafter"/>
</dbReference>
<dbReference type="GO" id="GO:0006412">
    <property type="term" value="P:translation"/>
    <property type="evidence" value="ECO:0007669"/>
    <property type="project" value="UniProtKB-UniRule"/>
</dbReference>
<dbReference type="FunFam" id="3.30.860.10:FF:000001">
    <property type="entry name" value="30S ribosomal protein S19"/>
    <property type="match status" value="1"/>
</dbReference>
<dbReference type="Gene3D" id="3.30.860.10">
    <property type="entry name" value="30s Ribosomal Protein S19, Chain A"/>
    <property type="match status" value="1"/>
</dbReference>
<dbReference type="HAMAP" id="MF_00531">
    <property type="entry name" value="Ribosomal_uS19"/>
    <property type="match status" value="1"/>
</dbReference>
<dbReference type="InterPro" id="IPR002222">
    <property type="entry name" value="Ribosomal_uS19"/>
</dbReference>
<dbReference type="InterPro" id="IPR005732">
    <property type="entry name" value="Ribosomal_uS19_bac-type"/>
</dbReference>
<dbReference type="InterPro" id="IPR020934">
    <property type="entry name" value="Ribosomal_uS19_CS"/>
</dbReference>
<dbReference type="InterPro" id="IPR023575">
    <property type="entry name" value="Ribosomal_uS19_SF"/>
</dbReference>
<dbReference type="NCBIfam" id="TIGR01050">
    <property type="entry name" value="rpsS_bact"/>
    <property type="match status" value="1"/>
</dbReference>
<dbReference type="PANTHER" id="PTHR11880">
    <property type="entry name" value="RIBOSOMAL PROTEIN S19P FAMILY MEMBER"/>
    <property type="match status" value="1"/>
</dbReference>
<dbReference type="PANTHER" id="PTHR11880:SF8">
    <property type="entry name" value="SMALL RIBOSOMAL SUBUNIT PROTEIN US19M"/>
    <property type="match status" value="1"/>
</dbReference>
<dbReference type="Pfam" id="PF00203">
    <property type="entry name" value="Ribosomal_S19"/>
    <property type="match status" value="1"/>
</dbReference>
<dbReference type="PIRSF" id="PIRSF002144">
    <property type="entry name" value="Ribosomal_S19"/>
    <property type="match status" value="1"/>
</dbReference>
<dbReference type="PRINTS" id="PR00975">
    <property type="entry name" value="RIBOSOMALS19"/>
</dbReference>
<dbReference type="SUPFAM" id="SSF54570">
    <property type="entry name" value="Ribosomal protein S19"/>
    <property type="match status" value="1"/>
</dbReference>
<dbReference type="PROSITE" id="PS00323">
    <property type="entry name" value="RIBOSOMAL_S19"/>
    <property type="match status" value="1"/>
</dbReference>
<evidence type="ECO:0000255" key="1">
    <source>
        <dbReference type="HAMAP-Rule" id="MF_00531"/>
    </source>
</evidence>
<evidence type="ECO:0000305" key="2"/>
<sequence>MTRSLKKNPFVAKHLLRKIEKLNTKAEKEIIITWSRASTIIPTMIGHTIAIHNGREHLPVYIIDLMVGHKLGEFSPTINFRGHAKNDNRSRR</sequence>
<protein>
    <recommendedName>
        <fullName evidence="1">Small ribosomal subunit protein uS19c</fullName>
    </recommendedName>
    <alternativeName>
        <fullName evidence="2">30S ribosomal protein S19, chloroplastic</fullName>
    </alternativeName>
</protein>
<name>RR19_OLIPU</name>
<keyword id="KW-0150">Chloroplast</keyword>
<keyword id="KW-0934">Plastid</keyword>
<keyword id="KW-0687">Ribonucleoprotein</keyword>
<keyword id="KW-0689">Ribosomal protein</keyword>
<keyword id="KW-0694">RNA-binding</keyword>
<keyword id="KW-0699">rRNA-binding</keyword>
<comment type="function">
    <text evidence="1">Protein S19 forms a complex with S13 that binds strongly to the 16S ribosomal RNA.</text>
</comment>
<comment type="subcellular location">
    <subcellularLocation>
        <location>Plastid</location>
        <location>Chloroplast</location>
    </subcellularLocation>
</comment>
<comment type="similarity">
    <text evidence="1">Belongs to the universal ribosomal protein uS19 family.</text>
</comment>
<reference key="1">
    <citation type="submission" date="2007-03" db="EMBL/GenBank/DDBJ databases">
        <title>Sequence analysis of Arabidopsis pumila JS2 chloroplast DNA.</title>
        <authorList>
            <person name="Hosouchi T."/>
            <person name="Tsuruoka H."/>
            <person name="Kotani H."/>
        </authorList>
    </citation>
    <scope>NUCLEOTIDE SEQUENCE [LARGE SCALE GENOMIC DNA]</scope>
</reference>
<accession>A4QJX1</accession>
<geneLocation type="chloroplast"/>